<reference key="1">
    <citation type="submission" date="2005-05" db="EMBL/GenBank/DDBJ databases">
        <title>Bacterial expression of the WSCI gene and characterization of the recombinant product.</title>
        <authorList>
            <person name="Grassau B."/>
            <person name="Frenzel K."/>
            <person name="Baur X."/>
            <person name="Yu F."/>
        </authorList>
    </citation>
    <scope>NUCLEOTIDE SEQUENCE [MRNA]</scope>
</reference>
<reference key="2">
    <citation type="journal article" date="2003" name="Biol. Chem.">
        <title>Primary structure and reactive site of a novel wheat proteinase inhibitor of subtilisin and chymotrypsin.</title>
        <authorList>
            <person name="Poerio E."/>
            <person name="Di Gennaro S."/>
            <person name="Di Maro A."/>
            <person name="Farisei F."/>
            <person name="Ferranti P."/>
            <person name="Parente A."/>
        </authorList>
    </citation>
    <scope>PROTEIN SEQUENCE OF 13-84</scope>
    <scope>FUNCTION</scope>
    <scope>BIOPHYSICOCHEMICAL PROPERTIES</scope>
    <scope>SUBUNIT</scope>
    <scope>MASS SPECTROMETRY</scope>
    <scope>REACTIVE SITE</scope>
    <source>
        <strain>cv. San Pastore</strain>
        <tissue>Endosperm</tissue>
    </source>
</reference>
<reference key="3">
    <citation type="journal article" date="2005" name="Biol. Chem.">
        <title>cDNA cloning and heterologous expression of a wheat proteinase inhibitor of subtilisin and chymotrypsin (WSCI) that interferes with digestive enzymes of insect pests.</title>
        <authorList>
            <person name="Di Gennaro S."/>
            <person name="Ficca A."/>
            <person name="Panichi D."/>
            <person name="Poerio E."/>
        </authorList>
    </citation>
    <scope>NUCLEOTIDE SEQUENCE [MRNA] OF 13-84</scope>
    <scope>FUNCTION</scope>
    <source>
        <strain>cv. San Pastore</strain>
        <tissue>Immature kernel</tissue>
    </source>
</reference>
<name>ICIW_WHEAT</name>
<feature type="signal peptide" evidence="2">
    <location>
        <begin position="1"/>
        <end position="12"/>
    </location>
</feature>
<feature type="chain" id="PRO_0000217651" description="Subtilisin-chymotrypsin inhibitor WSCI">
    <location>
        <begin position="13"/>
        <end position="84"/>
    </location>
</feature>
<feature type="region of interest" description="Disordered" evidence="1">
    <location>
        <begin position="1"/>
        <end position="28"/>
    </location>
</feature>
<feature type="compositionally biased region" description="Basic and acidic residues" evidence="1">
    <location>
        <begin position="15"/>
        <end position="25"/>
    </location>
</feature>
<feature type="site" description="Reactive bond">
    <location>
        <begin position="60"/>
        <end position="61"/>
    </location>
</feature>
<feature type="sequence conflict" description="In Ref. 1; AAY45744." evidence="4" ref="1">
    <original>V</original>
    <variation>I</variation>
    <location>
        <position position="51"/>
    </location>
</feature>
<feature type="sequence conflict" description="In Ref. 1; AAY45744." evidence="4" ref="1">
    <original>R</original>
    <variation>C</variation>
    <location>
        <position position="68"/>
    </location>
</feature>
<organism>
    <name type="scientific">Triticum aestivum</name>
    <name type="common">Wheat</name>
    <dbReference type="NCBI Taxonomy" id="4565"/>
    <lineage>
        <taxon>Eukaryota</taxon>
        <taxon>Viridiplantae</taxon>
        <taxon>Streptophyta</taxon>
        <taxon>Embryophyta</taxon>
        <taxon>Tracheophyta</taxon>
        <taxon>Spermatophyta</taxon>
        <taxon>Magnoliopsida</taxon>
        <taxon>Liliopsida</taxon>
        <taxon>Poales</taxon>
        <taxon>Poaceae</taxon>
        <taxon>BOP clade</taxon>
        <taxon>Pooideae</taxon>
        <taxon>Triticodae</taxon>
        <taxon>Triticeae</taxon>
        <taxon>Triticinae</taxon>
        <taxon>Triticum</taxon>
    </lineage>
</organism>
<keyword id="KW-0903">Direct protein sequencing</keyword>
<keyword id="KW-0646">Protease inhibitor</keyword>
<keyword id="KW-1185">Reference proteome</keyword>
<keyword id="KW-0964">Secreted</keyword>
<keyword id="KW-0722">Serine protease inhibitor</keyword>
<keyword id="KW-0732">Signal</keyword>
<proteinExistence type="evidence at protein level"/>
<protein>
    <recommendedName>
        <fullName>Subtilisin-chymotrypsin inhibitor WSCI</fullName>
    </recommendedName>
</protein>
<evidence type="ECO:0000256" key="1">
    <source>
        <dbReference type="SAM" id="MobiDB-lite"/>
    </source>
</evidence>
<evidence type="ECO:0000269" key="2">
    <source>
    </source>
</evidence>
<evidence type="ECO:0000269" key="3">
    <source>
    </source>
</evidence>
<evidence type="ECO:0000305" key="4"/>
<sequence length="84" mass="9326">MSSVVKKPLGGNTDTGDHHNQKTEWPELVGKSVEEAKKVILQDKSEAQIVVLPVGTIVTMEYRIDRVRLFVDSLDKIAQVPRVG</sequence>
<accession>P82977</accession>
<accession>Q4TZQ0</accession>
<accession>Q546I0</accession>
<dbReference type="EMBL" id="DQ025758">
    <property type="protein sequence ID" value="AAY45744.1"/>
    <property type="molecule type" value="mRNA"/>
</dbReference>
<dbReference type="EMBL" id="AJ422055">
    <property type="protein sequence ID" value="CAD19324.1"/>
    <property type="molecule type" value="mRNA"/>
</dbReference>
<dbReference type="SMR" id="P82977"/>
<dbReference type="STRING" id="4565.P82977"/>
<dbReference type="Allergome" id="10784">
    <property type="allergen name" value="Tri a 39.0101"/>
</dbReference>
<dbReference type="Allergome" id="4075">
    <property type="allergen name" value="Tri a 39"/>
</dbReference>
<dbReference type="MEROPS" id="I13.012"/>
<dbReference type="PaxDb" id="4565-Traes_2AL_66F52DEED.1"/>
<dbReference type="eggNOG" id="ENOG502R3R2">
    <property type="taxonomic scope" value="Eukaryota"/>
</dbReference>
<dbReference type="Proteomes" id="UP000019116">
    <property type="component" value="Unplaced"/>
</dbReference>
<dbReference type="ExpressionAtlas" id="P82977">
    <property type="expression patterns" value="baseline"/>
</dbReference>
<dbReference type="GO" id="GO:0005576">
    <property type="term" value="C:extracellular region"/>
    <property type="evidence" value="ECO:0007669"/>
    <property type="project" value="UniProtKB-SubCell"/>
</dbReference>
<dbReference type="GO" id="GO:0004867">
    <property type="term" value="F:serine-type endopeptidase inhibitor activity"/>
    <property type="evidence" value="ECO:0007669"/>
    <property type="project" value="UniProtKB-KW"/>
</dbReference>
<dbReference type="GO" id="GO:0009611">
    <property type="term" value="P:response to wounding"/>
    <property type="evidence" value="ECO:0007669"/>
    <property type="project" value="InterPro"/>
</dbReference>
<dbReference type="Gene3D" id="3.30.10.10">
    <property type="entry name" value="Trypsin Inhibitor V, subunit A"/>
    <property type="match status" value="1"/>
</dbReference>
<dbReference type="InterPro" id="IPR000864">
    <property type="entry name" value="Prot_inh_pot1"/>
</dbReference>
<dbReference type="InterPro" id="IPR036354">
    <property type="entry name" value="Prot_inh_pot1_sf"/>
</dbReference>
<dbReference type="PANTHER" id="PTHR33091">
    <property type="entry name" value="PROTEIN, PUTATIVE, EXPRESSED-RELATED"/>
    <property type="match status" value="1"/>
</dbReference>
<dbReference type="PANTHER" id="PTHR33091:SF55">
    <property type="entry name" value="SUBTILISIN-CHYMOTRYPSIN INHIBITOR WSCI"/>
    <property type="match status" value="1"/>
</dbReference>
<dbReference type="Pfam" id="PF00280">
    <property type="entry name" value="potato_inhibit"/>
    <property type="match status" value="1"/>
</dbReference>
<dbReference type="PRINTS" id="PR00292">
    <property type="entry name" value="POTATOINHBTR"/>
</dbReference>
<dbReference type="SUPFAM" id="SSF54654">
    <property type="entry name" value="CI-2 family of serine protease inhibitors"/>
    <property type="match status" value="1"/>
</dbReference>
<dbReference type="PROSITE" id="PS00285">
    <property type="entry name" value="POTATO_INHIBITOR"/>
    <property type="match status" value="1"/>
</dbReference>
<comment type="function">
    <text evidence="2 3">Inhibits B.lichenoformis subtilisin, B.subtilis subtilisin, bovine pancreatic alpha-chymotrypsin and porcine alpha-chymotrypsin with Ki of 3.92 nM, 5.70 nM, 7.24 nM and 9.35 nM respectively. B.lichenoformis subtilisin is inhibited with a molar ratio of 1:0.87. Also inhibits chymotrypsin-like activities from the digestive tracts of the insect larvae T.molitor, P.interpunctella and H.armigera. Does not inhibit bovine pancreatic trypsin, porcine pancreatic elastase, or human leukocyte elastase.</text>
</comment>
<comment type="biophysicochemical properties">
    <temperatureDependence>
        <text evidence="2">Optimum temperature is 25 degrees Celsius when incubation is carried out at pH 7.0-9.0.</text>
    </temperatureDependence>
</comment>
<comment type="subunit">
    <text evidence="2">Monomer.</text>
</comment>
<comment type="subcellular location">
    <subcellularLocation>
        <location evidence="4">Secreted</location>
    </subcellularLocation>
</comment>
<comment type="mass spectrometry" mass="8126.3" error="0.5" method="Electrospray" evidence="2"/>
<comment type="similarity">
    <text evidence="4">Belongs to the protease inhibitor I13 (potato type I serine protease inhibitor) family.</text>
</comment>